<dbReference type="EC" id="2.4.1.21" evidence="1"/>
<dbReference type="EMBL" id="CP000915">
    <property type="protein sequence ID" value="ACD30573.1"/>
    <property type="molecule type" value="Genomic_DNA"/>
</dbReference>
<dbReference type="SMR" id="B2SFN0"/>
<dbReference type="CAZy" id="GT5">
    <property type="family name" value="Glycosyltransferase Family 5"/>
</dbReference>
<dbReference type="KEGG" id="ftm:FTM_0572"/>
<dbReference type="HOGENOM" id="CLU_009583_18_2_6"/>
<dbReference type="UniPathway" id="UPA00164"/>
<dbReference type="GO" id="GO:0005829">
    <property type="term" value="C:cytosol"/>
    <property type="evidence" value="ECO:0007669"/>
    <property type="project" value="TreeGrafter"/>
</dbReference>
<dbReference type="GO" id="GO:0009011">
    <property type="term" value="F:alpha-1,4-glucan glucosyltransferase (ADP-glucose donor) activity"/>
    <property type="evidence" value="ECO:0007669"/>
    <property type="project" value="UniProtKB-UniRule"/>
</dbReference>
<dbReference type="GO" id="GO:0004373">
    <property type="term" value="F:alpha-1,4-glucan glucosyltransferase (UDP-glucose donor) activity"/>
    <property type="evidence" value="ECO:0007669"/>
    <property type="project" value="InterPro"/>
</dbReference>
<dbReference type="GO" id="GO:0005978">
    <property type="term" value="P:glycogen biosynthetic process"/>
    <property type="evidence" value="ECO:0007669"/>
    <property type="project" value="UniProtKB-UniRule"/>
</dbReference>
<dbReference type="CDD" id="cd03791">
    <property type="entry name" value="GT5_Glycogen_synthase_DULL1-like"/>
    <property type="match status" value="1"/>
</dbReference>
<dbReference type="Gene3D" id="3.40.50.2000">
    <property type="entry name" value="Glycogen Phosphorylase B"/>
    <property type="match status" value="2"/>
</dbReference>
<dbReference type="HAMAP" id="MF_00484">
    <property type="entry name" value="Glycogen_synth"/>
    <property type="match status" value="1"/>
</dbReference>
<dbReference type="InterPro" id="IPR001296">
    <property type="entry name" value="Glyco_trans_1"/>
</dbReference>
<dbReference type="InterPro" id="IPR011835">
    <property type="entry name" value="GS/SS"/>
</dbReference>
<dbReference type="InterPro" id="IPR013534">
    <property type="entry name" value="Starch_synth_cat_dom"/>
</dbReference>
<dbReference type="NCBIfam" id="TIGR02095">
    <property type="entry name" value="glgA"/>
    <property type="match status" value="1"/>
</dbReference>
<dbReference type="NCBIfam" id="NF001899">
    <property type="entry name" value="PRK00654.1-2"/>
    <property type="match status" value="1"/>
</dbReference>
<dbReference type="PANTHER" id="PTHR45825:SF11">
    <property type="entry name" value="ALPHA AMYLASE DOMAIN-CONTAINING PROTEIN"/>
    <property type="match status" value="1"/>
</dbReference>
<dbReference type="PANTHER" id="PTHR45825">
    <property type="entry name" value="GRANULE-BOUND STARCH SYNTHASE 1, CHLOROPLASTIC/AMYLOPLASTIC"/>
    <property type="match status" value="1"/>
</dbReference>
<dbReference type="Pfam" id="PF08323">
    <property type="entry name" value="Glyco_transf_5"/>
    <property type="match status" value="1"/>
</dbReference>
<dbReference type="Pfam" id="PF00534">
    <property type="entry name" value="Glycos_transf_1"/>
    <property type="match status" value="1"/>
</dbReference>
<dbReference type="SUPFAM" id="SSF53756">
    <property type="entry name" value="UDP-Glycosyltransferase/glycogen phosphorylase"/>
    <property type="match status" value="1"/>
</dbReference>
<comment type="function">
    <text evidence="1">Synthesizes alpha-1,4-glucan chains using ADP-glucose.</text>
</comment>
<comment type="catalytic activity">
    <reaction evidence="1">
        <text>[(1-&gt;4)-alpha-D-glucosyl](n) + ADP-alpha-D-glucose = [(1-&gt;4)-alpha-D-glucosyl](n+1) + ADP + H(+)</text>
        <dbReference type="Rhea" id="RHEA:18189"/>
        <dbReference type="Rhea" id="RHEA-COMP:9584"/>
        <dbReference type="Rhea" id="RHEA-COMP:9587"/>
        <dbReference type="ChEBI" id="CHEBI:15378"/>
        <dbReference type="ChEBI" id="CHEBI:15444"/>
        <dbReference type="ChEBI" id="CHEBI:57498"/>
        <dbReference type="ChEBI" id="CHEBI:456216"/>
        <dbReference type="EC" id="2.4.1.21"/>
    </reaction>
</comment>
<comment type="pathway">
    <text evidence="1">Glycan biosynthesis; glycogen biosynthesis.</text>
</comment>
<comment type="similarity">
    <text evidence="1">Belongs to the glycosyltransferase 1 family. Bacterial/plant glycogen synthase subfamily.</text>
</comment>
<gene>
    <name evidence="1" type="primary">glgA</name>
    <name type="ordered locus">FTM_0572</name>
</gene>
<name>GLGA_FRATM</name>
<organism>
    <name type="scientific">Francisella tularensis subsp. mediasiatica (strain FSC147)</name>
    <dbReference type="NCBI Taxonomy" id="441952"/>
    <lineage>
        <taxon>Bacteria</taxon>
        <taxon>Pseudomonadati</taxon>
        <taxon>Pseudomonadota</taxon>
        <taxon>Gammaproteobacteria</taxon>
        <taxon>Thiotrichales</taxon>
        <taxon>Francisellaceae</taxon>
        <taxon>Francisella</taxon>
    </lineage>
</organism>
<protein>
    <recommendedName>
        <fullName evidence="1">Glycogen synthase</fullName>
        <ecNumber evidence="1">2.4.1.21</ecNumber>
    </recommendedName>
    <alternativeName>
        <fullName evidence="1">Starch [bacterial glycogen] synthase</fullName>
    </alternativeName>
</protein>
<evidence type="ECO:0000255" key="1">
    <source>
        <dbReference type="HAMAP-Rule" id="MF_00484"/>
    </source>
</evidence>
<feature type="chain" id="PRO_1000126078" description="Glycogen synthase">
    <location>
        <begin position="1"/>
        <end position="489"/>
    </location>
</feature>
<feature type="binding site" evidence="1">
    <location>
        <position position="15"/>
    </location>
    <ligand>
        <name>ADP-alpha-D-glucose</name>
        <dbReference type="ChEBI" id="CHEBI:57498"/>
    </ligand>
</feature>
<keyword id="KW-0320">Glycogen biosynthesis</keyword>
<keyword id="KW-0328">Glycosyltransferase</keyword>
<keyword id="KW-0808">Transferase</keyword>
<proteinExistence type="inferred from homology"/>
<reference key="1">
    <citation type="journal article" date="2009" name="PLoS Pathog.">
        <title>Molecular evolutionary consequences of niche restriction in Francisella tularensis, a facultative intracellular pathogen.</title>
        <authorList>
            <person name="Larsson P."/>
            <person name="Elfsmark D."/>
            <person name="Svensson K."/>
            <person name="Wikstroem P."/>
            <person name="Forsman M."/>
            <person name="Brettin T."/>
            <person name="Keim P."/>
            <person name="Johansson A."/>
        </authorList>
    </citation>
    <scope>NUCLEOTIDE SEQUENCE [LARGE SCALE GENOMIC DNA]</scope>
    <source>
        <strain>FSC147</strain>
    </source>
</reference>
<accession>B2SFN0</accession>
<sequence>MRVLHVCSELYPILKTGGLADVTAALPPALAGFGVDSRVLVPGFPAFINAIKDKQLLINIPSRFGAEEINIFLAKISNTKIDIYVIDAPSLFARPGNPYADSSNQAYADNYLRFALLGWVAARISEGLDAKWKPEIVHSHDWHAGLVPAYIKASELASGKKAVKTVFTVHNLAYQGLFPMSVFAELDLPGIFLSMNGLEFYGQVSFMKAGLYFADKITTVSPTYAKEIQIYEQGCGLEGLLADRHNDLYGVLNGVDPQIWNPKKDSLIATNYSSTTVATGKAKCKLALQQMMGLAEKEDALLFGIVTRLTEQKGLNLLIEAIGEITSRGGQIVLLGSGDKALEEVFLAAAKKYSKSIAVQIGYDEEQAHRIIAGSDVIMVPSRFEPCGLTQLYGLTYGTLPLVHKVGGLADTVIDSSLENLADGTATGFVFDEFSVESLTLVIRRAFALYNRKTDWKKVRKTAMQQQVTWDSSAEKIYQIYKNLVRENN</sequence>